<sequence>MDFETLLSYEWGVMMPEFIILGVAVALSLIDLFMPENRNRQLLGLFAFVGIAVSFVSLLSLWTSDVTSILGDTFRLDSFAKSFKALLLIGSALVLLLSIHYEPKERIAYRGEFYYLFLTALLGAMMMASSGDLITLFVGLELLSISSYILVAIRKKHTLANEAALKYVITGSIATAITLFGMSYIFGFTGSTNIKEIAVQLASTSDENHQYVLSLAFLLTFVGLSFKLASAPFHMWAPDVYQGATTPVVSFLSVVSKTAGFVIVLRVIVSVFAQTPAGSSASMLMTFAPYIAFLSGATMIIGNTIALRQRNVKRMLAYSSVAHAGYVLVAFASLSMFMFEAIWFYLLAYVFMTIGAFAILQVVSQHPDDEDISIFAGLYRRSPLMAIAMTIFLLSLAGIPGTAGFIGKMNIFLGAFVVEPAHYVLASIMVITTIISYVYYFGIFVQMFFRPVEHTHRLEWPPGVIAVVVICVIGTVLLGVFPNIAYDFLAPFQHFSDFLQ</sequence>
<name>NUON_ANOFW</name>
<proteinExistence type="inferred from homology"/>
<dbReference type="EC" id="7.1.1.-" evidence="1"/>
<dbReference type="EMBL" id="CP000922">
    <property type="protein sequence ID" value="ACJ35043.1"/>
    <property type="molecule type" value="Genomic_DNA"/>
</dbReference>
<dbReference type="RefSeq" id="WP_012576174.1">
    <property type="nucleotide sequence ID" value="NC_011567.1"/>
</dbReference>
<dbReference type="SMR" id="B7GME1"/>
<dbReference type="STRING" id="491915.Aflv_2690"/>
<dbReference type="GeneID" id="7038963"/>
<dbReference type="KEGG" id="afl:Aflv_2690"/>
<dbReference type="PATRIC" id="fig|491915.6.peg.2773"/>
<dbReference type="eggNOG" id="COG1007">
    <property type="taxonomic scope" value="Bacteria"/>
</dbReference>
<dbReference type="HOGENOM" id="CLU_007100_1_1_9"/>
<dbReference type="Proteomes" id="UP000000742">
    <property type="component" value="Chromosome"/>
</dbReference>
<dbReference type="GO" id="GO:0005886">
    <property type="term" value="C:plasma membrane"/>
    <property type="evidence" value="ECO:0007669"/>
    <property type="project" value="UniProtKB-SubCell"/>
</dbReference>
<dbReference type="GO" id="GO:0008137">
    <property type="term" value="F:NADH dehydrogenase (ubiquinone) activity"/>
    <property type="evidence" value="ECO:0007669"/>
    <property type="project" value="InterPro"/>
</dbReference>
<dbReference type="GO" id="GO:0050136">
    <property type="term" value="F:NADH:ubiquinone reductase (non-electrogenic) activity"/>
    <property type="evidence" value="ECO:0007669"/>
    <property type="project" value="UniProtKB-UniRule"/>
</dbReference>
<dbReference type="GO" id="GO:0048038">
    <property type="term" value="F:quinone binding"/>
    <property type="evidence" value="ECO:0007669"/>
    <property type="project" value="UniProtKB-KW"/>
</dbReference>
<dbReference type="GO" id="GO:0042773">
    <property type="term" value="P:ATP synthesis coupled electron transport"/>
    <property type="evidence" value="ECO:0007669"/>
    <property type="project" value="InterPro"/>
</dbReference>
<dbReference type="HAMAP" id="MF_00445">
    <property type="entry name" value="NDH1_NuoN_1"/>
    <property type="match status" value="1"/>
</dbReference>
<dbReference type="InterPro" id="IPR010096">
    <property type="entry name" value="NADH-Q_OxRdtase_suN/2"/>
</dbReference>
<dbReference type="InterPro" id="IPR001750">
    <property type="entry name" value="ND/Mrp_TM"/>
</dbReference>
<dbReference type="NCBIfam" id="TIGR01770">
    <property type="entry name" value="NDH_I_N"/>
    <property type="match status" value="1"/>
</dbReference>
<dbReference type="NCBIfam" id="NF004446">
    <property type="entry name" value="PRK05777.2-4"/>
    <property type="match status" value="1"/>
</dbReference>
<dbReference type="PANTHER" id="PTHR22773">
    <property type="entry name" value="NADH DEHYDROGENASE"/>
    <property type="match status" value="1"/>
</dbReference>
<dbReference type="Pfam" id="PF00361">
    <property type="entry name" value="Proton_antipo_M"/>
    <property type="match status" value="1"/>
</dbReference>
<protein>
    <recommendedName>
        <fullName evidence="1">NADH-quinone oxidoreductase subunit N</fullName>
        <ecNumber evidence="1">7.1.1.-</ecNumber>
    </recommendedName>
    <alternativeName>
        <fullName evidence="1">NADH dehydrogenase I subunit N</fullName>
    </alternativeName>
    <alternativeName>
        <fullName evidence="1">NDH-1 subunit N</fullName>
    </alternativeName>
</protein>
<organism>
    <name type="scientific">Anoxybacillus flavithermus (strain DSM 21510 / WK1)</name>
    <dbReference type="NCBI Taxonomy" id="491915"/>
    <lineage>
        <taxon>Bacteria</taxon>
        <taxon>Bacillati</taxon>
        <taxon>Bacillota</taxon>
        <taxon>Bacilli</taxon>
        <taxon>Bacillales</taxon>
        <taxon>Anoxybacillaceae</taxon>
        <taxon>Anoxybacillus</taxon>
    </lineage>
</organism>
<reference key="1">
    <citation type="journal article" date="2008" name="Genome Biol.">
        <title>Encapsulated in silica: genome, proteome and physiology of the thermophilic bacterium Anoxybacillus flavithermus WK1.</title>
        <authorList>
            <person name="Saw J.H."/>
            <person name="Mountain B.W."/>
            <person name="Feng L."/>
            <person name="Omelchenko M.V."/>
            <person name="Hou S."/>
            <person name="Saito J.A."/>
            <person name="Stott M.B."/>
            <person name="Li D."/>
            <person name="Zhao G."/>
            <person name="Wu J."/>
            <person name="Galperin M.Y."/>
            <person name="Koonin E.V."/>
            <person name="Makarova K.S."/>
            <person name="Wolf Y.I."/>
            <person name="Rigden D.J."/>
            <person name="Dunfield P.F."/>
            <person name="Wang L."/>
            <person name="Alam M."/>
        </authorList>
    </citation>
    <scope>NUCLEOTIDE SEQUENCE [LARGE SCALE GENOMIC DNA]</scope>
    <source>
        <strain>DSM 21510 / WK1</strain>
    </source>
</reference>
<keyword id="KW-1003">Cell membrane</keyword>
<keyword id="KW-0472">Membrane</keyword>
<keyword id="KW-0520">NAD</keyword>
<keyword id="KW-0874">Quinone</keyword>
<keyword id="KW-1278">Translocase</keyword>
<keyword id="KW-0812">Transmembrane</keyword>
<keyword id="KW-1133">Transmembrane helix</keyword>
<keyword id="KW-0813">Transport</keyword>
<feature type="chain" id="PRO_0000391097" description="NADH-quinone oxidoreductase subunit N">
    <location>
        <begin position="1"/>
        <end position="500"/>
    </location>
</feature>
<feature type="transmembrane region" description="Helical" evidence="1">
    <location>
        <begin position="13"/>
        <end position="33"/>
    </location>
</feature>
<feature type="transmembrane region" description="Helical" evidence="1">
    <location>
        <begin position="42"/>
        <end position="62"/>
    </location>
</feature>
<feature type="transmembrane region" description="Helical" evidence="1">
    <location>
        <begin position="79"/>
        <end position="99"/>
    </location>
</feature>
<feature type="transmembrane region" description="Helical" evidence="1">
    <location>
        <begin position="111"/>
        <end position="131"/>
    </location>
</feature>
<feature type="transmembrane region" description="Helical" evidence="1">
    <location>
        <begin position="133"/>
        <end position="153"/>
    </location>
</feature>
<feature type="transmembrane region" description="Helical" evidence="1">
    <location>
        <begin position="168"/>
        <end position="188"/>
    </location>
</feature>
<feature type="transmembrane region" description="Helical" evidence="1">
    <location>
        <begin position="211"/>
        <end position="231"/>
    </location>
</feature>
<feature type="transmembrane region" description="Helical" evidence="1">
    <location>
        <begin position="245"/>
        <end position="265"/>
    </location>
</feature>
<feature type="transmembrane region" description="Helical" evidence="1">
    <location>
        <begin position="281"/>
        <end position="301"/>
    </location>
</feature>
<feature type="transmembrane region" description="Helical" evidence="1">
    <location>
        <begin position="321"/>
        <end position="341"/>
    </location>
</feature>
<feature type="transmembrane region" description="Helical" evidence="1">
    <location>
        <begin position="342"/>
        <end position="362"/>
    </location>
</feature>
<feature type="transmembrane region" description="Helical" evidence="1">
    <location>
        <begin position="386"/>
        <end position="406"/>
    </location>
</feature>
<feature type="transmembrane region" description="Helical" evidence="1">
    <location>
        <begin position="424"/>
        <end position="444"/>
    </location>
</feature>
<feature type="transmembrane region" description="Helical" evidence="1">
    <location>
        <begin position="461"/>
        <end position="481"/>
    </location>
</feature>
<gene>
    <name evidence="1" type="primary">nuoN</name>
    <name type="ordered locus">Aflv_2690</name>
</gene>
<accession>B7GME1</accession>
<evidence type="ECO:0000255" key="1">
    <source>
        <dbReference type="HAMAP-Rule" id="MF_00445"/>
    </source>
</evidence>
<comment type="function">
    <text evidence="1">NDH-1 shuttles electrons from NADH, via FMN and iron-sulfur (Fe-S) centers, to quinones in the respiratory chain. The immediate electron acceptor for the enzyme in this species is believed to be a menaquinone. Couples the redox reaction to proton translocation (for every two electrons transferred, four hydrogen ions are translocated across the cytoplasmic membrane), and thus conserves the redox energy in a proton gradient.</text>
</comment>
<comment type="catalytic activity">
    <reaction evidence="1">
        <text>a quinone + NADH + 5 H(+)(in) = a quinol + NAD(+) + 4 H(+)(out)</text>
        <dbReference type="Rhea" id="RHEA:57888"/>
        <dbReference type="ChEBI" id="CHEBI:15378"/>
        <dbReference type="ChEBI" id="CHEBI:24646"/>
        <dbReference type="ChEBI" id="CHEBI:57540"/>
        <dbReference type="ChEBI" id="CHEBI:57945"/>
        <dbReference type="ChEBI" id="CHEBI:132124"/>
    </reaction>
</comment>
<comment type="subunit">
    <text evidence="1">NDH-1 is composed of 14 different subunits. Subunits NuoA, H, J, K, L, M, N constitute the membrane sector of the complex.</text>
</comment>
<comment type="subcellular location">
    <subcellularLocation>
        <location evidence="1">Cell membrane</location>
        <topology evidence="1">Multi-pass membrane protein</topology>
    </subcellularLocation>
</comment>
<comment type="similarity">
    <text evidence="1">Belongs to the complex I subunit 2 family.</text>
</comment>